<name>GUDU_DROME</name>
<accession>Q9VM21</accession>
<accession>Q6NNW8</accession>
<protein>
    <recommendedName>
        <fullName evidence="4">Armadillo repeat-containing protein gudu</fullName>
    </recommendedName>
</protein>
<reference evidence="9" key="1">
    <citation type="journal article" date="2000" name="Science">
        <title>The genome sequence of Drosophila melanogaster.</title>
        <authorList>
            <person name="Adams M.D."/>
            <person name="Celniker S.E."/>
            <person name="Holt R.A."/>
            <person name="Evans C.A."/>
            <person name="Gocayne J.D."/>
            <person name="Amanatides P.G."/>
            <person name="Scherer S.E."/>
            <person name="Li P.W."/>
            <person name="Hoskins R.A."/>
            <person name="Galle R.F."/>
            <person name="George R.A."/>
            <person name="Lewis S.E."/>
            <person name="Richards S."/>
            <person name="Ashburner M."/>
            <person name="Henderson S.N."/>
            <person name="Sutton G.G."/>
            <person name="Wortman J.R."/>
            <person name="Yandell M.D."/>
            <person name="Zhang Q."/>
            <person name="Chen L.X."/>
            <person name="Brandon R.C."/>
            <person name="Rogers Y.-H.C."/>
            <person name="Blazej R.G."/>
            <person name="Champe M."/>
            <person name="Pfeiffer B.D."/>
            <person name="Wan K.H."/>
            <person name="Doyle C."/>
            <person name="Baxter E.G."/>
            <person name="Helt G."/>
            <person name="Nelson C.R."/>
            <person name="Miklos G.L.G."/>
            <person name="Abril J.F."/>
            <person name="Agbayani A."/>
            <person name="An H.-J."/>
            <person name="Andrews-Pfannkoch C."/>
            <person name="Baldwin D."/>
            <person name="Ballew R.M."/>
            <person name="Basu A."/>
            <person name="Baxendale J."/>
            <person name="Bayraktaroglu L."/>
            <person name="Beasley E.M."/>
            <person name="Beeson K.Y."/>
            <person name="Benos P.V."/>
            <person name="Berman B.P."/>
            <person name="Bhandari D."/>
            <person name="Bolshakov S."/>
            <person name="Borkova D."/>
            <person name="Botchan M.R."/>
            <person name="Bouck J."/>
            <person name="Brokstein P."/>
            <person name="Brottier P."/>
            <person name="Burtis K.C."/>
            <person name="Busam D.A."/>
            <person name="Butler H."/>
            <person name="Cadieu E."/>
            <person name="Center A."/>
            <person name="Chandra I."/>
            <person name="Cherry J.M."/>
            <person name="Cawley S."/>
            <person name="Dahlke C."/>
            <person name="Davenport L.B."/>
            <person name="Davies P."/>
            <person name="de Pablos B."/>
            <person name="Delcher A."/>
            <person name="Deng Z."/>
            <person name="Mays A.D."/>
            <person name="Dew I."/>
            <person name="Dietz S.M."/>
            <person name="Dodson K."/>
            <person name="Doup L.E."/>
            <person name="Downes M."/>
            <person name="Dugan-Rocha S."/>
            <person name="Dunkov B.C."/>
            <person name="Dunn P."/>
            <person name="Durbin K.J."/>
            <person name="Evangelista C.C."/>
            <person name="Ferraz C."/>
            <person name="Ferriera S."/>
            <person name="Fleischmann W."/>
            <person name="Fosler C."/>
            <person name="Gabrielian A.E."/>
            <person name="Garg N.S."/>
            <person name="Gelbart W.M."/>
            <person name="Glasser K."/>
            <person name="Glodek A."/>
            <person name="Gong F."/>
            <person name="Gorrell J.H."/>
            <person name="Gu Z."/>
            <person name="Guan P."/>
            <person name="Harris M."/>
            <person name="Harris N.L."/>
            <person name="Harvey D.A."/>
            <person name="Heiman T.J."/>
            <person name="Hernandez J.R."/>
            <person name="Houck J."/>
            <person name="Hostin D."/>
            <person name="Houston K.A."/>
            <person name="Howland T.J."/>
            <person name="Wei M.-H."/>
            <person name="Ibegwam C."/>
            <person name="Jalali M."/>
            <person name="Kalush F."/>
            <person name="Karpen G.H."/>
            <person name="Ke Z."/>
            <person name="Kennison J.A."/>
            <person name="Ketchum K.A."/>
            <person name="Kimmel B.E."/>
            <person name="Kodira C.D."/>
            <person name="Kraft C.L."/>
            <person name="Kravitz S."/>
            <person name="Kulp D."/>
            <person name="Lai Z."/>
            <person name="Lasko P."/>
            <person name="Lei Y."/>
            <person name="Levitsky A.A."/>
            <person name="Li J.H."/>
            <person name="Li Z."/>
            <person name="Liang Y."/>
            <person name="Lin X."/>
            <person name="Liu X."/>
            <person name="Mattei B."/>
            <person name="McIntosh T.C."/>
            <person name="McLeod M.P."/>
            <person name="McPherson D."/>
            <person name="Merkulov G."/>
            <person name="Milshina N.V."/>
            <person name="Mobarry C."/>
            <person name="Morris J."/>
            <person name="Moshrefi A."/>
            <person name="Mount S.M."/>
            <person name="Moy M."/>
            <person name="Murphy B."/>
            <person name="Murphy L."/>
            <person name="Muzny D.M."/>
            <person name="Nelson D.L."/>
            <person name="Nelson D.R."/>
            <person name="Nelson K.A."/>
            <person name="Nixon K."/>
            <person name="Nusskern D.R."/>
            <person name="Pacleb J.M."/>
            <person name="Palazzolo M."/>
            <person name="Pittman G.S."/>
            <person name="Pan S."/>
            <person name="Pollard J."/>
            <person name="Puri V."/>
            <person name="Reese M.G."/>
            <person name="Reinert K."/>
            <person name="Remington K."/>
            <person name="Saunders R.D.C."/>
            <person name="Scheeler F."/>
            <person name="Shen H."/>
            <person name="Shue B.C."/>
            <person name="Siden-Kiamos I."/>
            <person name="Simpson M."/>
            <person name="Skupski M.P."/>
            <person name="Smith T.J."/>
            <person name="Spier E."/>
            <person name="Spradling A.C."/>
            <person name="Stapleton M."/>
            <person name="Strong R."/>
            <person name="Sun E."/>
            <person name="Svirskas R."/>
            <person name="Tector C."/>
            <person name="Turner R."/>
            <person name="Venter E."/>
            <person name="Wang A.H."/>
            <person name="Wang X."/>
            <person name="Wang Z.-Y."/>
            <person name="Wassarman D.A."/>
            <person name="Weinstock G.M."/>
            <person name="Weissenbach J."/>
            <person name="Williams S.M."/>
            <person name="Woodage T."/>
            <person name="Worley K.C."/>
            <person name="Wu D."/>
            <person name="Yang S."/>
            <person name="Yao Q.A."/>
            <person name="Ye J."/>
            <person name="Yeh R.-F."/>
            <person name="Zaveri J.S."/>
            <person name="Zhan M."/>
            <person name="Zhang G."/>
            <person name="Zhao Q."/>
            <person name="Zheng L."/>
            <person name="Zheng X.H."/>
            <person name="Zhong F.N."/>
            <person name="Zhong W."/>
            <person name="Zhou X."/>
            <person name="Zhu S.C."/>
            <person name="Zhu X."/>
            <person name="Smith H.O."/>
            <person name="Gibbs R.A."/>
            <person name="Myers E.W."/>
            <person name="Rubin G.M."/>
            <person name="Venter J.C."/>
        </authorList>
    </citation>
    <scope>NUCLEOTIDE SEQUENCE [LARGE SCALE GENOMIC DNA]</scope>
    <source>
        <strain evidence="9">Berkeley</strain>
    </source>
</reference>
<reference evidence="9" key="2">
    <citation type="journal article" date="2002" name="Genome Biol.">
        <title>Annotation of the Drosophila melanogaster euchromatic genome: a systematic review.</title>
        <authorList>
            <person name="Misra S."/>
            <person name="Crosby M.A."/>
            <person name="Mungall C.J."/>
            <person name="Matthews B.B."/>
            <person name="Campbell K.S."/>
            <person name="Hradecky P."/>
            <person name="Huang Y."/>
            <person name="Kaminker J.S."/>
            <person name="Millburn G.H."/>
            <person name="Prochnik S.E."/>
            <person name="Smith C.D."/>
            <person name="Tupy J.L."/>
            <person name="Whitfield E.J."/>
            <person name="Bayraktaroglu L."/>
            <person name="Berman B.P."/>
            <person name="Bettencourt B.R."/>
            <person name="Celniker S.E."/>
            <person name="de Grey A.D.N.J."/>
            <person name="Drysdale R.A."/>
            <person name="Harris N.L."/>
            <person name="Richter J."/>
            <person name="Russo S."/>
            <person name="Schroeder A.J."/>
            <person name="Shu S.Q."/>
            <person name="Stapleton M."/>
            <person name="Yamada C."/>
            <person name="Ashburner M."/>
            <person name="Gelbart W.M."/>
            <person name="Rubin G.M."/>
            <person name="Lewis S.E."/>
        </authorList>
    </citation>
    <scope>GENOME REANNOTATION</scope>
    <source>
        <strain evidence="9">Berkeley</strain>
    </source>
</reference>
<reference evidence="6 7" key="3">
    <citation type="submission" date="2009-06" db="EMBL/GenBank/DDBJ databases">
        <authorList>
            <person name="Stapleton M."/>
            <person name="Booth B."/>
            <person name="Brokstein P."/>
            <person name="Hong L."/>
            <person name="Agbayani A."/>
            <person name="Carlson J."/>
            <person name="Champe M."/>
            <person name="Chavez C."/>
            <person name="Dorsett V."/>
            <person name="Dresnek D."/>
            <person name="Farfan D."/>
            <person name="Frise E."/>
            <person name="George R."/>
            <person name="Gonzalez M."/>
            <person name="Guarin H."/>
            <person name="Kronmiller B."/>
            <person name="Li P."/>
            <person name="Liao G."/>
            <person name="Miranda A."/>
            <person name="Mungall C.J."/>
            <person name="Nunoo J."/>
            <person name="Pacleb J."/>
            <person name="Paragas V."/>
            <person name="Park S."/>
            <person name="Patel S."/>
            <person name="Phouanenavong S."/>
            <person name="Sandler J."/>
            <person name="Wan K."/>
            <person name="Yu C."/>
            <person name="Lewis S.E."/>
            <person name="Rubin G.M."/>
            <person name="Celniker S."/>
        </authorList>
    </citation>
    <scope>NUCLEOTIDE SEQUENCE [LARGE SCALE MRNA]</scope>
    <source>
        <tissue evidence="6">Testis</tissue>
    </source>
</reference>
<reference evidence="5" key="4">
    <citation type="journal article" date="2013" name="Gene">
        <title>Gudu, an Armadillo repeat-containing protein, is required for spermatogenesis in Drosophila.</title>
        <authorList>
            <person name="Cheng W."/>
            <person name="Ip Y.T."/>
            <person name="Xu Z."/>
        </authorList>
    </citation>
    <scope>FUNCTION</scope>
    <scope>TISSUE SPECIFICITY</scope>
    <scope>DISRUPTION PHENOTYPE</scope>
</reference>
<keyword id="KW-0221">Differentiation</keyword>
<keyword id="KW-1185">Reference proteome</keyword>
<keyword id="KW-0677">Repeat</keyword>
<keyword id="KW-0744">Spermatogenesis</keyword>
<comment type="function">
    <text evidence="3">Important for spermatogenesis where it may have a role in sperm individualization.</text>
</comment>
<comment type="tissue specificity">
    <text evidence="3">Highly expressed in testis.</text>
</comment>
<comment type="disruption phenotype">
    <text evidence="3">RNAi-mediated knockdown severely impairs male fertility. Morphology of the sperm individualization complex is highly abnormal. Seminal vesicles contain very few mature spermatozoa, which are often bundled together. Female fertility is not affected.</text>
</comment>
<comment type="miscellaneous">
    <text evidence="4">Gudu is Chinese for 'alone without progeny' and refers to the male infertility phenotype.</text>
</comment>
<gene>
    <name evidence="4 8" type="primary">gudu</name>
    <name evidence="8" type="ORF">CG5155</name>
</gene>
<feature type="chain" id="PRO_0000439052" description="Armadillo repeat-containing protein gudu">
    <location>
        <begin position="1"/>
        <end position="669"/>
    </location>
</feature>
<feature type="repeat" description="ARM 1" evidence="1">
    <location>
        <begin position="100"/>
        <end position="139"/>
    </location>
</feature>
<feature type="repeat" description="ARM 2" evidence="1">
    <location>
        <begin position="141"/>
        <end position="180"/>
    </location>
</feature>
<feature type="repeat" description="ARM 3" evidence="1">
    <location>
        <begin position="240"/>
        <end position="279"/>
    </location>
</feature>
<feature type="repeat" description="ARM 4" evidence="1">
    <location>
        <begin position="281"/>
        <end position="320"/>
    </location>
</feature>
<feature type="repeat" description="ARM 5" evidence="1">
    <location>
        <begin position="322"/>
        <end position="365"/>
    </location>
</feature>
<feature type="repeat" description="ARM 6" evidence="1">
    <location>
        <begin position="367"/>
        <end position="406"/>
    </location>
</feature>
<feature type="repeat" description="ARM 7" evidence="1">
    <location>
        <begin position="408"/>
        <end position="447"/>
    </location>
</feature>
<feature type="repeat" description="ARM 8" evidence="1">
    <location>
        <begin position="492"/>
        <end position="531"/>
    </location>
</feature>
<feature type="repeat" description="ARM 9" evidence="1">
    <location>
        <begin position="574"/>
        <end position="613"/>
    </location>
</feature>
<feature type="repeat" description="ARM 10" evidence="1">
    <location>
        <begin position="615"/>
        <end position="654"/>
    </location>
</feature>
<feature type="region of interest" description="Disordered" evidence="2">
    <location>
        <begin position="1"/>
        <end position="53"/>
    </location>
</feature>
<feature type="compositionally biased region" description="Polar residues" evidence="2">
    <location>
        <begin position="1"/>
        <end position="10"/>
    </location>
</feature>
<feature type="compositionally biased region" description="Acidic residues" evidence="2">
    <location>
        <begin position="37"/>
        <end position="51"/>
    </location>
</feature>
<feature type="sequence conflict" description="In Ref. 3; AAR82832." evidence="5" ref="3">
    <original>M</original>
    <variation>I</variation>
    <location>
        <position position="561"/>
    </location>
</feature>
<dbReference type="EMBL" id="AE014134">
    <property type="protein sequence ID" value="AAF52507.1"/>
    <property type="molecule type" value="Genomic_DNA"/>
</dbReference>
<dbReference type="EMBL" id="BT011164">
    <property type="protein sequence ID" value="AAR82832.1"/>
    <property type="molecule type" value="mRNA"/>
</dbReference>
<dbReference type="EMBL" id="BT088789">
    <property type="protein sequence ID" value="ACS12722.1"/>
    <property type="molecule type" value="mRNA"/>
</dbReference>
<dbReference type="RefSeq" id="NP_609111.1">
    <property type="nucleotide sequence ID" value="NM_135267.3"/>
</dbReference>
<dbReference type="SMR" id="Q9VM21"/>
<dbReference type="FunCoup" id="Q9VM21">
    <property type="interactions" value="19"/>
</dbReference>
<dbReference type="IntAct" id="Q9VM21">
    <property type="interactions" value="4"/>
</dbReference>
<dbReference type="STRING" id="7227.FBpp0079066"/>
<dbReference type="PaxDb" id="7227-FBpp0079066"/>
<dbReference type="DNASU" id="34014"/>
<dbReference type="EnsemblMetazoa" id="FBtr0079438">
    <property type="protein sequence ID" value="FBpp0079066"/>
    <property type="gene ID" value="FBgn0031905"/>
</dbReference>
<dbReference type="GeneID" id="34014"/>
<dbReference type="KEGG" id="dme:Dmel_CG5155"/>
<dbReference type="UCSC" id="CG5155-RA">
    <property type="organism name" value="d. melanogaster"/>
</dbReference>
<dbReference type="AGR" id="FB:FBgn0031905"/>
<dbReference type="CTD" id="34014"/>
<dbReference type="FlyBase" id="FBgn0031905">
    <property type="gene designation" value="gudu"/>
</dbReference>
<dbReference type="VEuPathDB" id="VectorBase:FBgn0031905"/>
<dbReference type="eggNOG" id="KOG0167">
    <property type="taxonomic scope" value="Eukaryota"/>
</dbReference>
<dbReference type="GeneTree" id="ENSGT00940000156625"/>
<dbReference type="HOGENOM" id="CLU_028951_0_0_1"/>
<dbReference type="InParanoid" id="Q9VM21"/>
<dbReference type="OMA" id="YMKAGNQ"/>
<dbReference type="OrthoDB" id="1683831at2759"/>
<dbReference type="PhylomeDB" id="Q9VM21"/>
<dbReference type="SignaLink" id="Q9VM21"/>
<dbReference type="BioGRID-ORCS" id="34014">
    <property type="hits" value="0 hits in 1 CRISPR screen"/>
</dbReference>
<dbReference type="GenomeRNAi" id="34014"/>
<dbReference type="PRO" id="PR:Q9VM21"/>
<dbReference type="Proteomes" id="UP000000803">
    <property type="component" value="Chromosome 2L"/>
</dbReference>
<dbReference type="Bgee" id="FBgn0031905">
    <property type="expression patterns" value="Expressed in early elongation stage spermatid (Drosophila) in testis and 19 other cell types or tissues"/>
</dbReference>
<dbReference type="GO" id="GO:0007291">
    <property type="term" value="P:sperm individualization"/>
    <property type="evidence" value="ECO:0000315"/>
    <property type="project" value="FlyBase"/>
</dbReference>
<dbReference type="FunFam" id="1.25.10.10:FF:000798">
    <property type="entry name" value="Armadillo repeat-containing protein gudu"/>
    <property type="match status" value="1"/>
</dbReference>
<dbReference type="FunFam" id="1.25.10.10:FF:001231">
    <property type="entry name" value="GD23466"/>
    <property type="match status" value="1"/>
</dbReference>
<dbReference type="Gene3D" id="1.25.10.10">
    <property type="entry name" value="Leucine-rich Repeat Variant"/>
    <property type="match status" value="3"/>
</dbReference>
<dbReference type="InterPro" id="IPR011989">
    <property type="entry name" value="ARM-like"/>
</dbReference>
<dbReference type="InterPro" id="IPR016024">
    <property type="entry name" value="ARM-type_fold"/>
</dbReference>
<dbReference type="InterPro" id="IPR000225">
    <property type="entry name" value="Armadillo"/>
</dbReference>
<dbReference type="PANTHER" id="PTHR46241">
    <property type="entry name" value="ARMADILLO REPEAT-CONTAINING PROTEIN 4 ARMC4"/>
    <property type="match status" value="1"/>
</dbReference>
<dbReference type="PANTHER" id="PTHR46241:SF1">
    <property type="entry name" value="OUTER DYNEIN ARM-DOCKING COMPLEX SUBUNIT 2"/>
    <property type="match status" value="1"/>
</dbReference>
<dbReference type="Pfam" id="PF00514">
    <property type="entry name" value="Arm"/>
    <property type="match status" value="1"/>
</dbReference>
<dbReference type="SMART" id="SM00185">
    <property type="entry name" value="ARM"/>
    <property type="match status" value="9"/>
</dbReference>
<dbReference type="SUPFAM" id="SSF48371">
    <property type="entry name" value="ARM repeat"/>
    <property type="match status" value="3"/>
</dbReference>
<evidence type="ECO:0000255" key="1"/>
<evidence type="ECO:0000256" key="2">
    <source>
        <dbReference type="SAM" id="MobiDB-lite"/>
    </source>
</evidence>
<evidence type="ECO:0000269" key="3">
    <source>
    </source>
</evidence>
<evidence type="ECO:0000303" key="4">
    <source>
    </source>
</evidence>
<evidence type="ECO:0000305" key="5"/>
<evidence type="ECO:0000312" key="6">
    <source>
        <dbReference type="EMBL" id="AAR82832.1"/>
    </source>
</evidence>
<evidence type="ECO:0000312" key="7">
    <source>
        <dbReference type="EMBL" id="ACS12722.1"/>
    </source>
</evidence>
<evidence type="ECO:0000312" key="8">
    <source>
        <dbReference type="FlyBase" id="FBgn0031905"/>
    </source>
</evidence>
<evidence type="ECO:0000312" key="9">
    <source>
        <dbReference type="Proteomes" id="UP000000803"/>
    </source>
</evidence>
<proteinExistence type="evidence at transcript level"/>
<organism evidence="9">
    <name type="scientific">Drosophila melanogaster</name>
    <name type="common">Fruit fly</name>
    <dbReference type="NCBI Taxonomy" id="7227"/>
    <lineage>
        <taxon>Eukaryota</taxon>
        <taxon>Metazoa</taxon>
        <taxon>Ecdysozoa</taxon>
        <taxon>Arthropoda</taxon>
        <taxon>Hexapoda</taxon>
        <taxon>Insecta</taxon>
        <taxon>Pterygota</taxon>
        <taxon>Neoptera</taxon>
        <taxon>Endopterygota</taxon>
        <taxon>Diptera</taxon>
        <taxon>Brachycera</taxon>
        <taxon>Muscomorpha</taxon>
        <taxon>Ephydroidea</taxon>
        <taxon>Drosophilidae</taxon>
        <taxon>Drosophila</taxon>
        <taxon>Sophophora</taxon>
    </lineage>
</organism>
<sequence>MIGTSSGTSHNRSRKKKEQCGSCPNRFSKDKRQVAAEDSDTTEVESSTDEEERWKEVARAAEIPADYYNIQKLVKYIKAGNQTATIVSLCCLKDYDLSTQINQFAISDIGGLDVLVNILECSDTKCCLGALKVLSDITLNIDIRKTIVDLDGIPLIVDILNSSMKDLKTMAAETLANVCKVRLARKYVRTCGGIPKLVDLIDIKLSILKTPRDQLSPDDLESLDMTRAGARALFTLADSKHNMEQMRKSGIVPLMAQLLKSCHIDVVIPIMGTVRKCSSEPKFQLAITTEGMIPDIVSHLSSENTELKMEGSTAIYKCAFDGTTRDLVREAGGLEPLVTIIKDKNVRENKPLLRGATGAIWMCAVTDANVKVLDQLRTVNHLVALLNDECDEVLTNVTGAISECVRFQSNREQLRQAGGLPAMVSLLNSSHAPLLENLAKGLKECAEDPDSMRILEDLDAVRLIWSLLKNPTTRVQAHAAYAICPCVRNANDSAELVRSLVGAMELVVGLLKSKDIMVLSAVCAAIATIAQDQTNLAILTDLKVIYKLADLVQTTDDLLRMNLAAAVAACACFGNNTEELGRLRTVTPIVTYMTSDNPLVHRSTAMALEKLSMDPQNCITMHQSGVVPFLLECIGSTNKELQLAAAGCLRNIRELALRAEEYLLKIDDD</sequence>